<sequence>MESPIRFENVDINTILKTLPHRFPFLLIDRVINIREDYSGIGIKNVTVNEPAFQGHFPERPVYPGVLMIEGMAQTAGVIGILSVTGTEKPRAVYFLTIDKCKFRKPVMPGDTVEYHLTRTGRRKTMWWFHGEAKVDGQIVAEADVGAMLAD</sequence>
<reference key="1">
    <citation type="journal article" date="2004" name="Nat. Biotechnol.">
        <title>Complete genome sequence of the metabolically versatile photosynthetic bacterium Rhodopseudomonas palustris.</title>
        <authorList>
            <person name="Larimer F.W."/>
            <person name="Chain P."/>
            <person name="Hauser L."/>
            <person name="Lamerdin J.E."/>
            <person name="Malfatti S."/>
            <person name="Do L."/>
            <person name="Land M.L."/>
            <person name="Pelletier D.A."/>
            <person name="Beatty J.T."/>
            <person name="Lang A.S."/>
            <person name="Tabita F.R."/>
            <person name="Gibson J.L."/>
            <person name="Hanson T.E."/>
            <person name="Bobst C."/>
            <person name="Torres y Torres J.L."/>
            <person name="Peres C."/>
            <person name="Harrison F.H."/>
            <person name="Gibson J."/>
            <person name="Harwood C.S."/>
        </authorList>
    </citation>
    <scope>NUCLEOTIDE SEQUENCE [LARGE SCALE GENOMIC DNA]</scope>
    <source>
        <strain>ATCC BAA-98 / CGA009</strain>
    </source>
</reference>
<name>FABZ_RHOPA</name>
<protein>
    <recommendedName>
        <fullName evidence="1">3-hydroxyacyl-[acyl-carrier-protein] dehydratase FabZ</fullName>
        <ecNumber evidence="1">4.2.1.59</ecNumber>
    </recommendedName>
    <alternativeName>
        <fullName evidence="1">(3R)-hydroxymyristoyl-[acyl-carrier-protein] dehydratase</fullName>
        <shortName evidence="1">(3R)-hydroxymyristoyl-ACP dehydrase</shortName>
    </alternativeName>
    <alternativeName>
        <fullName evidence="1">Beta-hydroxyacyl-ACP dehydratase</fullName>
    </alternativeName>
</protein>
<accession>P61454</accession>
<dbReference type="EC" id="4.2.1.59" evidence="1"/>
<dbReference type="EMBL" id="BX572602">
    <property type="protein sequence ID" value="CAE28353.1"/>
    <property type="molecule type" value="Genomic_DNA"/>
</dbReference>
<dbReference type="RefSeq" id="WP_011158461.1">
    <property type="nucleotide sequence ID" value="NZ_CP116810.1"/>
</dbReference>
<dbReference type="SMR" id="P61454"/>
<dbReference type="STRING" id="258594.RPA2912"/>
<dbReference type="GeneID" id="66893994"/>
<dbReference type="eggNOG" id="COG0764">
    <property type="taxonomic scope" value="Bacteria"/>
</dbReference>
<dbReference type="HOGENOM" id="CLU_078912_1_0_5"/>
<dbReference type="PhylomeDB" id="P61454"/>
<dbReference type="GO" id="GO:0005737">
    <property type="term" value="C:cytoplasm"/>
    <property type="evidence" value="ECO:0007669"/>
    <property type="project" value="UniProtKB-SubCell"/>
</dbReference>
<dbReference type="GO" id="GO:0016020">
    <property type="term" value="C:membrane"/>
    <property type="evidence" value="ECO:0007669"/>
    <property type="project" value="GOC"/>
</dbReference>
<dbReference type="GO" id="GO:0019171">
    <property type="term" value="F:(3R)-hydroxyacyl-[acyl-carrier-protein] dehydratase activity"/>
    <property type="evidence" value="ECO:0007669"/>
    <property type="project" value="UniProtKB-EC"/>
</dbReference>
<dbReference type="GO" id="GO:0006633">
    <property type="term" value="P:fatty acid biosynthetic process"/>
    <property type="evidence" value="ECO:0007669"/>
    <property type="project" value="UniProtKB-UniRule"/>
</dbReference>
<dbReference type="GO" id="GO:0009245">
    <property type="term" value="P:lipid A biosynthetic process"/>
    <property type="evidence" value="ECO:0007669"/>
    <property type="project" value="UniProtKB-UniRule"/>
</dbReference>
<dbReference type="CDD" id="cd01288">
    <property type="entry name" value="FabZ"/>
    <property type="match status" value="1"/>
</dbReference>
<dbReference type="FunFam" id="3.10.129.10:FF:000001">
    <property type="entry name" value="3-hydroxyacyl-[acyl-carrier-protein] dehydratase FabZ"/>
    <property type="match status" value="1"/>
</dbReference>
<dbReference type="Gene3D" id="3.10.129.10">
    <property type="entry name" value="Hotdog Thioesterase"/>
    <property type="match status" value="1"/>
</dbReference>
<dbReference type="HAMAP" id="MF_00406">
    <property type="entry name" value="FabZ"/>
    <property type="match status" value="1"/>
</dbReference>
<dbReference type="InterPro" id="IPR013114">
    <property type="entry name" value="FabA_FabZ"/>
</dbReference>
<dbReference type="InterPro" id="IPR010084">
    <property type="entry name" value="FabZ"/>
</dbReference>
<dbReference type="InterPro" id="IPR029069">
    <property type="entry name" value="HotDog_dom_sf"/>
</dbReference>
<dbReference type="NCBIfam" id="TIGR01750">
    <property type="entry name" value="fabZ"/>
    <property type="match status" value="1"/>
</dbReference>
<dbReference type="NCBIfam" id="NF000582">
    <property type="entry name" value="PRK00006.1"/>
    <property type="match status" value="1"/>
</dbReference>
<dbReference type="PANTHER" id="PTHR30272">
    <property type="entry name" value="3-HYDROXYACYL-[ACYL-CARRIER-PROTEIN] DEHYDRATASE"/>
    <property type="match status" value="1"/>
</dbReference>
<dbReference type="PANTHER" id="PTHR30272:SF1">
    <property type="entry name" value="3-HYDROXYACYL-[ACYL-CARRIER-PROTEIN] DEHYDRATASE"/>
    <property type="match status" value="1"/>
</dbReference>
<dbReference type="Pfam" id="PF07977">
    <property type="entry name" value="FabA"/>
    <property type="match status" value="1"/>
</dbReference>
<dbReference type="SUPFAM" id="SSF54637">
    <property type="entry name" value="Thioesterase/thiol ester dehydrase-isomerase"/>
    <property type="match status" value="1"/>
</dbReference>
<gene>
    <name evidence="1" type="primary">fabZ</name>
    <name type="ordered locus">RPA2912</name>
</gene>
<evidence type="ECO:0000255" key="1">
    <source>
        <dbReference type="HAMAP-Rule" id="MF_00406"/>
    </source>
</evidence>
<keyword id="KW-0963">Cytoplasm</keyword>
<keyword id="KW-0441">Lipid A biosynthesis</keyword>
<keyword id="KW-0444">Lipid biosynthesis</keyword>
<keyword id="KW-0443">Lipid metabolism</keyword>
<keyword id="KW-0456">Lyase</keyword>
<comment type="function">
    <text evidence="1">Involved in unsaturated fatty acids biosynthesis. Catalyzes the dehydration of short chain beta-hydroxyacyl-ACPs and long chain saturated and unsaturated beta-hydroxyacyl-ACPs.</text>
</comment>
<comment type="catalytic activity">
    <reaction evidence="1">
        <text>a (3R)-hydroxyacyl-[ACP] = a (2E)-enoyl-[ACP] + H2O</text>
        <dbReference type="Rhea" id="RHEA:13097"/>
        <dbReference type="Rhea" id="RHEA-COMP:9925"/>
        <dbReference type="Rhea" id="RHEA-COMP:9945"/>
        <dbReference type="ChEBI" id="CHEBI:15377"/>
        <dbReference type="ChEBI" id="CHEBI:78784"/>
        <dbReference type="ChEBI" id="CHEBI:78827"/>
        <dbReference type="EC" id="4.2.1.59"/>
    </reaction>
</comment>
<comment type="subcellular location">
    <subcellularLocation>
        <location evidence="1">Cytoplasm</location>
    </subcellularLocation>
</comment>
<comment type="similarity">
    <text evidence="1">Belongs to the thioester dehydratase family. FabZ subfamily.</text>
</comment>
<proteinExistence type="inferred from homology"/>
<organism>
    <name type="scientific">Rhodopseudomonas palustris (strain ATCC BAA-98 / CGA009)</name>
    <dbReference type="NCBI Taxonomy" id="258594"/>
    <lineage>
        <taxon>Bacteria</taxon>
        <taxon>Pseudomonadati</taxon>
        <taxon>Pseudomonadota</taxon>
        <taxon>Alphaproteobacteria</taxon>
        <taxon>Hyphomicrobiales</taxon>
        <taxon>Nitrobacteraceae</taxon>
        <taxon>Rhodopseudomonas</taxon>
    </lineage>
</organism>
<feature type="chain" id="PRO_0000091719" description="3-hydroxyacyl-[acyl-carrier-protein] dehydratase FabZ">
    <location>
        <begin position="1"/>
        <end position="151"/>
    </location>
</feature>
<feature type="active site" evidence="1">
    <location>
        <position position="56"/>
    </location>
</feature>